<sequence>MGSKRRVILLPTLGVVVLAIAAAVLLHAGEAADVANGQFARASGTRFTVGGRPFYSNGFNAYWLMYMASDPGDRSKAAGVLQQAASLRATLVRTWAFSDGGYRPLQKSPGVYNEDMFMGLDFVIAEAKKRGLYLILSLVNNWDGFGGKKQYVQWARDQGHNLGSDDDFFRSDVTKQFYKNHAVLTRVNKITGVAYKDDPTIFAWELINEPRCQSDLSGKTLQAWVTEMAGYVKSVDPNHMVEIGLEGFYGESMHKNFNPGYTVGTDFIANNLVPAVDFATIHSYPDQWVSGASSDEQVAFMRKWMADHIRDSAAVLRKPLLVTEFGWSARSNGYTVAARDAYFRTVYDAVYASAREGGACAGGLFWQVMAPGMESWTDGYEVVLERSKSTADVVAHQCARIAGLSPA</sequence>
<name>MAN9_ORYSJ</name>
<keyword id="KW-0326">Glycosidase</keyword>
<keyword id="KW-0378">Hydrolase</keyword>
<keyword id="KW-1185">Reference proteome</keyword>
<keyword id="KW-0964">Secreted</keyword>
<keyword id="KW-0732">Signal</keyword>
<protein>
    <recommendedName>
        <fullName>Putative mannan endo-1,4-beta-mannosidase 9</fullName>
        <ecNumber>3.2.1.78</ecNumber>
    </recommendedName>
    <alternativeName>
        <fullName>Beta-mannanase 9</fullName>
    </alternativeName>
    <alternativeName>
        <fullName>Endo-beta-1,4-mannanase 9</fullName>
    </alternativeName>
    <alternativeName>
        <fullName>OsMANP</fullName>
    </alternativeName>
    <alternativeName>
        <fullName>OsMan9</fullName>
    </alternativeName>
</protein>
<proteinExistence type="evidence at transcript level"/>
<comment type="catalytic activity">
    <reaction>
        <text>Random hydrolysis of (1-&gt;4)-beta-D-mannosidic linkages in mannans, galactomannans and glucomannans.</text>
        <dbReference type="EC" id="3.2.1.78"/>
    </reaction>
</comment>
<comment type="subcellular location">
    <subcellularLocation>
        <location evidence="4">Secreted</location>
    </subcellularLocation>
</comment>
<comment type="tissue specificity">
    <text>Expression not detected.</text>
</comment>
<comment type="similarity">
    <text evidence="4">Belongs to the glycosyl hydrolase 5 (cellulase A) family.</text>
</comment>
<feature type="signal peptide" evidence="3">
    <location>
        <begin position="1"/>
        <end position="31"/>
    </location>
</feature>
<feature type="chain" id="PRO_0000277490" description="Putative mannan endo-1,4-beta-mannosidase 9">
    <location>
        <begin position="32"/>
        <end position="407"/>
    </location>
</feature>
<feature type="active site" description="Proton donor" evidence="2">
    <location>
        <position position="209"/>
    </location>
</feature>
<feature type="active site" description="Nucleophile" evidence="2">
    <location>
        <position position="324"/>
    </location>
</feature>
<feature type="binding site" evidence="1">
    <location>
        <position position="95"/>
    </location>
    <ligand>
        <name>substrate</name>
    </ligand>
</feature>
<feature type="binding site" evidence="1">
    <location>
        <position position="208"/>
    </location>
    <ligand>
        <name>substrate</name>
    </ligand>
</feature>
<feature type="binding site" evidence="1">
    <location>
        <position position="284"/>
    </location>
    <ligand>
        <name>substrate</name>
    </ligand>
</feature>
<feature type="binding site" evidence="1">
    <location>
        <position position="366"/>
    </location>
    <ligand>
        <name>substrate</name>
    </ligand>
</feature>
<evidence type="ECO:0000250" key="1">
    <source>
        <dbReference type="UniProtKB" id="B4XC07"/>
    </source>
</evidence>
<evidence type="ECO:0000250" key="2">
    <source>
        <dbReference type="UniProtKB" id="Q99036"/>
    </source>
</evidence>
<evidence type="ECO:0000255" key="3"/>
<evidence type="ECO:0000305" key="4"/>
<gene>
    <name type="primary">MAN9</name>
    <name type="ordered locus">Os02g0766900</name>
    <name type="ordered locus">LOC_Os02g52800</name>
    <name type="ORF">OJ1004_A11.22</name>
    <name type="ORF">P0539D10.41</name>
</gene>
<organism>
    <name type="scientific">Oryza sativa subsp. japonica</name>
    <name type="common">Rice</name>
    <dbReference type="NCBI Taxonomy" id="39947"/>
    <lineage>
        <taxon>Eukaryota</taxon>
        <taxon>Viridiplantae</taxon>
        <taxon>Streptophyta</taxon>
        <taxon>Embryophyta</taxon>
        <taxon>Tracheophyta</taxon>
        <taxon>Spermatophyta</taxon>
        <taxon>Magnoliopsida</taxon>
        <taxon>Liliopsida</taxon>
        <taxon>Poales</taxon>
        <taxon>Poaceae</taxon>
        <taxon>BOP clade</taxon>
        <taxon>Oryzoideae</taxon>
        <taxon>Oryzeae</taxon>
        <taxon>Oryzinae</taxon>
        <taxon>Oryza</taxon>
        <taxon>Oryza sativa</taxon>
    </lineage>
</organism>
<accession>Q6Z310</accession>
<dbReference type="EC" id="3.2.1.78"/>
<dbReference type="EMBL" id="AP004817">
    <property type="protein sequence ID" value="BAD17132.1"/>
    <property type="molecule type" value="Genomic_DNA"/>
</dbReference>
<dbReference type="EMBL" id="AP005287">
    <property type="protein sequence ID" value="BAD17320.1"/>
    <property type="molecule type" value="Genomic_DNA"/>
</dbReference>
<dbReference type="EMBL" id="AP008208">
    <property type="protein sequence ID" value="BAF10140.2"/>
    <property type="molecule type" value="Genomic_DNA"/>
</dbReference>
<dbReference type="EMBL" id="AP014958">
    <property type="status" value="NOT_ANNOTATED_CDS"/>
    <property type="molecule type" value="Genomic_DNA"/>
</dbReference>
<dbReference type="SMR" id="Q6Z310"/>
<dbReference type="FunCoup" id="Q6Z310">
    <property type="interactions" value="8"/>
</dbReference>
<dbReference type="STRING" id="39947.Q6Z310"/>
<dbReference type="CAZy" id="GH5">
    <property type="family name" value="Glycoside Hydrolase Family 5"/>
</dbReference>
<dbReference type="PaxDb" id="39947-Q6Z310"/>
<dbReference type="KEGG" id="dosa:Os02g0766900"/>
<dbReference type="eggNOG" id="ENOG502QS4Q">
    <property type="taxonomic scope" value="Eukaryota"/>
</dbReference>
<dbReference type="InParanoid" id="Q6Z310"/>
<dbReference type="Proteomes" id="UP000000763">
    <property type="component" value="Chromosome 2"/>
</dbReference>
<dbReference type="Proteomes" id="UP000059680">
    <property type="component" value="Chromosome 2"/>
</dbReference>
<dbReference type="GO" id="GO:0005576">
    <property type="term" value="C:extracellular region"/>
    <property type="evidence" value="ECO:0007669"/>
    <property type="project" value="UniProtKB-SubCell"/>
</dbReference>
<dbReference type="GO" id="GO:0016985">
    <property type="term" value="F:mannan endo-1,4-beta-mannosidase activity"/>
    <property type="evidence" value="ECO:0000318"/>
    <property type="project" value="GO_Central"/>
</dbReference>
<dbReference type="GO" id="GO:0000272">
    <property type="term" value="P:polysaccharide catabolic process"/>
    <property type="evidence" value="ECO:0007669"/>
    <property type="project" value="InterPro"/>
</dbReference>
<dbReference type="FunFam" id="3.20.20.80:FF:000012">
    <property type="entry name" value="Mannan endo-1,4-beta-mannosidase 6"/>
    <property type="match status" value="1"/>
</dbReference>
<dbReference type="Gene3D" id="3.20.20.80">
    <property type="entry name" value="Glycosidases"/>
    <property type="match status" value="1"/>
</dbReference>
<dbReference type="InterPro" id="IPR001547">
    <property type="entry name" value="Glyco_hydro_5"/>
</dbReference>
<dbReference type="InterPro" id="IPR017853">
    <property type="entry name" value="Glycoside_hydrolase_SF"/>
</dbReference>
<dbReference type="InterPro" id="IPR045053">
    <property type="entry name" value="MAN-like"/>
</dbReference>
<dbReference type="PANTHER" id="PTHR31451">
    <property type="match status" value="1"/>
</dbReference>
<dbReference type="PANTHER" id="PTHR31451:SF39">
    <property type="entry name" value="MANNAN ENDO-1,4-BETA-MANNOSIDASE 1"/>
    <property type="match status" value="1"/>
</dbReference>
<dbReference type="Pfam" id="PF00150">
    <property type="entry name" value="Cellulase"/>
    <property type="match status" value="1"/>
</dbReference>
<dbReference type="SUPFAM" id="SSF51445">
    <property type="entry name" value="(Trans)glycosidases"/>
    <property type="match status" value="1"/>
</dbReference>
<reference key="1">
    <citation type="journal article" date="2005" name="Nature">
        <title>The map-based sequence of the rice genome.</title>
        <authorList>
            <consortium name="International rice genome sequencing project (IRGSP)"/>
        </authorList>
    </citation>
    <scope>NUCLEOTIDE SEQUENCE [LARGE SCALE GENOMIC DNA]</scope>
    <source>
        <strain>cv. Nipponbare</strain>
    </source>
</reference>
<reference key="2">
    <citation type="journal article" date="2008" name="Nucleic Acids Res.">
        <title>The rice annotation project database (RAP-DB): 2008 update.</title>
        <authorList>
            <consortium name="The rice annotation project (RAP)"/>
        </authorList>
    </citation>
    <scope>GENOME REANNOTATION</scope>
    <source>
        <strain>cv. Nipponbare</strain>
    </source>
</reference>
<reference key="3">
    <citation type="journal article" date="2013" name="Rice">
        <title>Improvement of the Oryza sativa Nipponbare reference genome using next generation sequence and optical map data.</title>
        <authorList>
            <person name="Kawahara Y."/>
            <person name="de la Bastide M."/>
            <person name="Hamilton J.P."/>
            <person name="Kanamori H."/>
            <person name="McCombie W.R."/>
            <person name="Ouyang S."/>
            <person name="Schwartz D.C."/>
            <person name="Tanaka T."/>
            <person name="Wu J."/>
            <person name="Zhou S."/>
            <person name="Childs K.L."/>
            <person name="Davidson R.M."/>
            <person name="Lin H."/>
            <person name="Quesada-Ocampo L."/>
            <person name="Vaillancourt B."/>
            <person name="Sakai H."/>
            <person name="Lee S.S."/>
            <person name="Kim J."/>
            <person name="Numa H."/>
            <person name="Itoh T."/>
            <person name="Buell C.R."/>
            <person name="Matsumoto T."/>
        </authorList>
    </citation>
    <scope>GENOME REANNOTATION</scope>
    <source>
        <strain>cv. Nipponbare</strain>
    </source>
</reference>
<reference key="4">
    <citation type="journal article" date="2007" name="Funct. Integr. Genomics">
        <title>The endo-beta-mannanase gene families in Arabidopsis, rice, and poplar.</title>
        <authorList>
            <person name="Yuan J.S."/>
            <person name="Yang X."/>
            <person name="Lai J."/>
            <person name="Lin H."/>
            <person name="Cheng Z.-M."/>
            <person name="Nonogaki H."/>
            <person name="Chen F."/>
        </authorList>
    </citation>
    <scope>GENE FAMILY</scope>
</reference>